<feature type="chain" id="PRO_0000195977" description="Histone H1">
    <location>
        <begin position="1"/>
        <end position="181"/>
    </location>
</feature>
<feature type="domain" description="H15" evidence="1">
    <location>
        <begin position="20"/>
        <end position="94"/>
    </location>
</feature>
<feature type="region of interest" description="Disordered" evidence="2">
    <location>
        <begin position="1"/>
        <end position="23"/>
    </location>
</feature>
<feature type="region of interest" description="Disordered" evidence="2">
    <location>
        <begin position="81"/>
        <end position="181"/>
    </location>
</feature>
<feature type="compositionally biased region" description="Basic residues" evidence="2">
    <location>
        <begin position="8"/>
        <end position="19"/>
    </location>
</feature>
<feature type="compositionally biased region" description="Basic residues" evidence="2">
    <location>
        <begin position="103"/>
        <end position="119"/>
    </location>
</feature>
<feature type="compositionally biased region" description="Basic residues" evidence="2">
    <location>
        <begin position="145"/>
        <end position="181"/>
    </location>
</feature>
<protein>
    <recommendedName>
        <fullName>Histone H1</fullName>
    </recommendedName>
</protein>
<comment type="function">
    <text>Histones H1 are necessary for the condensation of nucleosome chains into higher-order structures.</text>
</comment>
<comment type="subcellular location">
    <subcellularLocation>
        <location>Nucleus</location>
    </subcellularLocation>
    <subcellularLocation>
        <location>Chromosome</location>
    </subcellularLocation>
</comment>
<comment type="similarity">
    <text evidence="1">Belongs to the histone H1/H5 family.</text>
</comment>
<evidence type="ECO:0000255" key="1">
    <source>
        <dbReference type="PROSITE-ProRule" id="PRU00837"/>
    </source>
</evidence>
<evidence type="ECO:0000256" key="2">
    <source>
        <dbReference type="SAM" id="MobiDB-lite"/>
    </source>
</evidence>
<sequence>MTETTSAKPKKVSKPKAKPTHPPTSVMVMAAIKALKERNGSSLPAIKKYIAANYKVDVVKNAHFIKKALKSLVEKKKLVQTKGAGASGSFKLAAAAKAEKPKAVAKPKKAKTPKKKAAATKKPTGEKKAKTPKKKPAAKKPAAAKPKKAKTPKKKAAPAKKTPVKKVKKTSPKKKAAPKKK</sequence>
<reference key="1">
    <citation type="journal article" date="1992" name="DNA Seq.">
        <title>Closely linked H2B genes in the marine copepod, Tigriopus californicus indicate a recent gene duplication or gene conversion event.</title>
        <authorList>
            <person name="Brown D."/>
            <person name="Cook A."/>
            <person name="Wagner M."/>
            <person name="Wells D."/>
        </authorList>
    </citation>
    <scope>NUCLEOTIDE SEQUENCE [GENOMIC DNA]</scope>
</reference>
<name>H1_TIGCA</name>
<dbReference type="EMBL" id="S49118">
    <property type="protein sequence ID" value="AAA12276.1"/>
    <property type="molecule type" value="Genomic_DNA"/>
</dbReference>
<dbReference type="EMBL" id="M84797">
    <property type="protein sequence ID" value="AAC41551.1"/>
    <property type="molecule type" value="Genomic_DNA"/>
</dbReference>
<dbReference type="PIR" id="A56612">
    <property type="entry name" value="A56612"/>
</dbReference>
<dbReference type="SMR" id="P35060"/>
<dbReference type="EnsemblMetazoa" id="TCAL_13520-PA_mrna">
    <property type="protein sequence ID" value="TRY68411.1"/>
    <property type="gene ID" value="TCAL_13520"/>
</dbReference>
<dbReference type="GO" id="GO:0000786">
    <property type="term" value="C:nucleosome"/>
    <property type="evidence" value="ECO:0007669"/>
    <property type="project" value="InterPro"/>
</dbReference>
<dbReference type="GO" id="GO:0005634">
    <property type="term" value="C:nucleus"/>
    <property type="evidence" value="ECO:0007669"/>
    <property type="project" value="UniProtKB-SubCell"/>
</dbReference>
<dbReference type="GO" id="GO:0003690">
    <property type="term" value="F:double-stranded DNA binding"/>
    <property type="evidence" value="ECO:0007669"/>
    <property type="project" value="TreeGrafter"/>
</dbReference>
<dbReference type="GO" id="GO:0031492">
    <property type="term" value="F:nucleosomal DNA binding"/>
    <property type="evidence" value="ECO:0007669"/>
    <property type="project" value="TreeGrafter"/>
</dbReference>
<dbReference type="GO" id="GO:0030527">
    <property type="term" value="F:structural constituent of chromatin"/>
    <property type="evidence" value="ECO:0007669"/>
    <property type="project" value="InterPro"/>
</dbReference>
<dbReference type="GO" id="GO:0030261">
    <property type="term" value="P:chromosome condensation"/>
    <property type="evidence" value="ECO:0007669"/>
    <property type="project" value="TreeGrafter"/>
</dbReference>
<dbReference type="GO" id="GO:0045910">
    <property type="term" value="P:negative regulation of DNA recombination"/>
    <property type="evidence" value="ECO:0007669"/>
    <property type="project" value="TreeGrafter"/>
</dbReference>
<dbReference type="GO" id="GO:0006334">
    <property type="term" value="P:nucleosome assembly"/>
    <property type="evidence" value="ECO:0007669"/>
    <property type="project" value="InterPro"/>
</dbReference>
<dbReference type="CDD" id="cd00073">
    <property type="entry name" value="H15"/>
    <property type="match status" value="1"/>
</dbReference>
<dbReference type="FunFam" id="1.10.10.10:FF:000140">
    <property type="entry name" value="Histone H1.0"/>
    <property type="match status" value="1"/>
</dbReference>
<dbReference type="Gene3D" id="1.10.10.10">
    <property type="entry name" value="Winged helix-like DNA-binding domain superfamily/Winged helix DNA-binding domain"/>
    <property type="match status" value="1"/>
</dbReference>
<dbReference type="InterPro" id="IPR005819">
    <property type="entry name" value="H1/H5"/>
</dbReference>
<dbReference type="InterPro" id="IPR005818">
    <property type="entry name" value="Histone_H1/H5_H15"/>
</dbReference>
<dbReference type="InterPro" id="IPR036388">
    <property type="entry name" value="WH-like_DNA-bd_sf"/>
</dbReference>
<dbReference type="InterPro" id="IPR036390">
    <property type="entry name" value="WH_DNA-bd_sf"/>
</dbReference>
<dbReference type="PANTHER" id="PTHR11467:SF20">
    <property type="entry name" value="H15 DOMAIN-CONTAINING PROTEIN-RELATED"/>
    <property type="match status" value="1"/>
</dbReference>
<dbReference type="PANTHER" id="PTHR11467">
    <property type="entry name" value="HISTONE H1"/>
    <property type="match status" value="1"/>
</dbReference>
<dbReference type="Pfam" id="PF00538">
    <property type="entry name" value="Linker_histone"/>
    <property type="match status" value="1"/>
</dbReference>
<dbReference type="PRINTS" id="PR00624">
    <property type="entry name" value="HISTONEH5"/>
</dbReference>
<dbReference type="SMART" id="SM00526">
    <property type="entry name" value="H15"/>
    <property type="match status" value="1"/>
</dbReference>
<dbReference type="SUPFAM" id="SSF46785">
    <property type="entry name" value="Winged helix' DNA-binding domain"/>
    <property type="match status" value="1"/>
</dbReference>
<dbReference type="PROSITE" id="PS51504">
    <property type="entry name" value="H15"/>
    <property type="match status" value="1"/>
</dbReference>
<proteinExistence type="inferred from homology"/>
<keyword id="KW-0158">Chromosome</keyword>
<keyword id="KW-0238">DNA-binding</keyword>
<keyword id="KW-0539">Nucleus</keyword>
<accession>P35060</accession>
<organism>
    <name type="scientific">Tigriopus californicus</name>
    <name type="common">Marine copepod</name>
    <dbReference type="NCBI Taxonomy" id="6832"/>
    <lineage>
        <taxon>Eukaryota</taxon>
        <taxon>Metazoa</taxon>
        <taxon>Ecdysozoa</taxon>
        <taxon>Arthropoda</taxon>
        <taxon>Crustacea</taxon>
        <taxon>Multicrustacea</taxon>
        <taxon>Hexanauplia</taxon>
        <taxon>Copepoda</taxon>
        <taxon>Harpacticoida</taxon>
        <taxon>Harpacticidae</taxon>
        <taxon>Tigriopus</taxon>
    </lineage>
</organism>